<organism>
    <name type="scientific">Carassius cuvieri</name>
    <name type="common">Japanese white crucian carp</name>
    <dbReference type="NCBI Taxonomy" id="52617"/>
    <lineage>
        <taxon>Eukaryota</taxon>
        <taxon>Metazoa</taxon>
        <taxon>Chordata</taxon>
        <taxon>Craniata</taxon>
        <taxon>Vertebrata</taxon>
        <taxon>Euteleostomi</taxon>
        <taxon>Actinopterygii</taxon>
        <taxon>Neopterygii</taxon>
        <taxon>Teleostei</taxon>
        <taxon>Ostariophysi</taxon>
        <taxon>Cypriniformes</taxon>
        <taxon>Cyprinidae</taxon>
        <taxon>Cyprininae</taxon>
        <taxon>Carassius</taxon>
    </lineage>
</organism>
<protein>
    <recommendedName>
        <fullName>Metallothionein A</fullName>
        <shortName>MT-A</shortName>
    </recommendedName>
</protein>
<dbReference type="EMBL" id="AY165047">
    <property type="protein sequence ID" value="AAN85819.1"/>
    <property type="molecule type" value="mRNA"/>
</dbReference>
<dbReference type="SMR" id="Q8AWG2"/>
<dbReference type="GO" id="GO:0046872">
    <property type="term" value="F:metal ion binding"/>
    <property type="evidence" value="ECO:0007669"/>
    <property type="project" value="UniProtKB-KW"/>
</dbReference>
<dbReference type="FunFam" id="4.10.10.10:FF:000001">
    <property type="entry name" value="Metallothionein"/>
    <property type="match status" value="1"/>
</dbReference>
<dbReference type="Gene3D" id="4.10.10.10">
    <property type="entry name" value="Metallothionein Isoform II"/>
    <property type="match status" value="1"/>
</dbReference>
<dbReference type="InterPro" id="IPR017854">
    <property type="entry name" value="Metalthion_dom_sf"/>
</dbReference>
<dbReference type="InterPro" id="IPR023587">
    <property type="entry name" value="Metalthion_dom_sf_vert"/>
</dbReference>
<dbReference type="InterPro" id="IPR000006">
    <property type="entry name" value="Metalthion_vert"/>
</dbReference>
<dbReference type="InterPro" id="IPR018064">
    <property type="entry name" value="Metalthion_vert_metal_BS"/>
</dbReference>
<dbReference type="PANTHER" id="PTHR23299">
    <property type="entry name" value="METALLOTHIONEIN"/>
    <property type="match status" value="1"/>
</dbReference>
<dbReference type="PANTHER" id="PTHR23299:SF24">
    <property type="entry name" value="METALLOTHIONEIN-1X"/>
    <property type="match status" value="1"/>
</dbReference>
<dbReference type="Pfam" id="PF00131">
    <property type="entry name" value="Metallothio"/>
    <property type="match status" value="1"/>
</dbReference>
<dbReference type="PRINTS" id="PR00860">
    <property type="entry name" value="MTVERTEBRATE"/>
</dbReference>
<dbReference type="SUPFAM" id="SSF57868">
    <property type="entry name" value="Metallothionein"/>
    <property type="match status" value="1"/>
</dbReference>
<dbReference type="PROSITE" id="PS00203">
    <property type="entry name" value="METALLOTHIONEIN_VRT"/>
    <property type="match status" value="1"/>
</dbReference>
<keyword id="KW-0479">Metal-binding</keyword>
<keyword id="KW-0480">Metal-thiolate cluster</keyword>
<proteinExistence type="inferred from homology"/>
<comment type="function">
    <text evidence="1">Metallothioneins have a high content of cysteine residues that bind various heavy metals.</text>
</comment>
<comment type="domain">
    <text>Class I metallothioneins contain 2 metal-binding domains: four divalent ions are chelated within cluster A of the alpha domain and are coordinated via cysteinyl thiolate bridges to 11 cysteine ligands. Cluster B, the corresponding region within the beta domain, can ligate three divalent ions to 9 cysteines.</text>
</comment>
<comment type="similarity">
    <text evidence="4">Belongs to the metallothionein superfamily. Type 1 family.</text>
</comment>
<feature type="chain" id="PRO_0000197271" description="Metallothionein A">
    <location>
        <begin position="1"/>
        <end position="60"/>
    </location>
</feature>
<feature type="region of interest" description="Beta">
    <location>
        <begin position="1"/>
        <end position="28"/>
    </location>
</feature>
<feature type="region of interest" description="Alpha">
    <location>
        <begin position="29"/>
        <end position="60"/>
    </location>
</feature>
<feature type="binding site" evidence="2">
    <location>
        <position position="4"/>
    </location>
    <ligand>
        <name>a divalent metal cation</name>
        <dbReference type="ChEBI" id="CHEBI:60240"/>
        <label>1</label>
        <note>in cluster B</note>
    </ligand>
</feature>
<feature type="binding site" evidence="2">
    <location>
        <position position="6"/>
    </location>
    <ligand>
        <name>a divalent metal cation</name>
        <dbReference type="ChEBI" id="CHEBI:60240"/>
        <label>1</label>
        <note>in cluster B</note>
    </ligand>
</feature>
<feature type="binding site" evidence="2">
    <location>
        <position position="6"/>
    </location>
    <ligand>
        <name>a divalent metal cation</name>
        <dbReference type="ChEBI" id="CHEBI:60240"/>
        <label>2</label>
        <note>in cluster B</note>
    </ligand>
</feature>
<feature type="binding site" evidence="2">
    <location>
        <position position="12"/>
    </location>
    <ligand>
        <name>a divalent metal cation</name>
        <dbReference type="ChEBI" id="CHEBI:60240"/>
        <label>2</label>
        <note>in cluster B</note>
    </ligand>
</feature>
<feature type="binding site" evidence="2">
    <location>
        <position position="14"/>
    </location>
    <ligand>
        <name>a divalent metal cation</name>
        <dbReference type="ChEBI" id="CHEBI:60240"/>
        <label>2</label>
        <note>in cluster B</note>
    </ligand>
</feature>
<feature type="binding site" evidence="2">
    <location>
        <position position="14"/>
    </location>
    <ligand>
        <name>a divalent metal cation</name>
        <dbReference type="ChEBI" id="CHEBI:60240"/>
        <label>3</label>
        <note>in cluster B</note>
    </ligand>
</feature>
<feature type="binding site" evidence="2">
    <location>
        <position position="18"/>
    </location>
    <ligand>
        <name>a divalent metal cation</name>
        <dbReference type="ChEBI" id="CHEBI:60240"/>
        <label>3</label>
        <note>in cluster B</note>
    </ligand>
</feature>
<feature type="binding site" evidence="2">
    <location>
        <position position="20"/>
    </location>
    <ligand>
        <name>a divalent metal cation</name>
        <dbReference type="ChEBI" id="CHEBI:60240"/>
        <label>1</label>
        <note>in cluster B</note>
    </ligand>
</feature>
<feature type="binding site" evidence="2">
    <location>
        <position position="23"/>
    </location>
    <ligand>
        <name>a divalent metal cation</name>
        <dbReference type="ChEBI" id="CHEBI:60240"/>
        <label>1</label>
        <note>in cluster B</note>
    </ligand>
</feature>
<feature type="binding site" evidence="2">
    <location>
        <position position="23"/>
    </location>
    <ligand>
        <name>a divalent metal cation</name>
        <dbReference type="ChEBI" id="CHEBI:60240"/>
        <label>3</label>
        <note>in cluster B</note>
    </ligand>
</feature>
<feature type="binding site" evidence="2">
    <location>
        <position position="25"/>
    </location>
    <ligand>
        <name>a divalent metal cation</name>
        <dbReference type="ChEBI" id="CHEBI:60240"/>
        <label>2</label>
        <note>in cluster B</note>
    </ligand>
</feature>
<feature type="binding site" evidence="2">
    <location>
        <position position="28"/>
    </location>
    <ligand>
        <name>a divalent metal cation</name>
        <dbReference type="ChEBI" id="CHEBI:60240"/>
        <label>3</label>
        <note>in cluster B</note>
    </ligand>
</feature>
<feature type="binding site" evidence="2">
    <location>
        <position position="32"/>
    </location>
    <ligand>
        <name>a divalent metal cation</name>
        <dbReference type="ChEBI" id="CHEBI:60240"/>
        <label>4</label>
        <note>in cluster A</note>
    </ligand>
</feature>
<feature type="binding site" evidence="2">
    <location>
        <position position="33"/>
    </location>
    <ligand>
        <name>a divalent metal cation</name>
        <dbReference type="ChEBI" id="CHEBI:60240"/>
        <label>4</label>
        <note>in cluster A</note>
    </ligand>
</feature>
<feature type="binding site" evidence="2">
    <location>
        <position position="33"/>
    </location>
    <ligand>
        <name>a divalent metal cation</name>
        <dbReference type="ChEBI" id="CHEBI:60240"/>
        <label>5</label>
        <note>in cluster A</note>
    </ligand>
</feature>
<feature type="binding site" evidence="2">
    <location>
        <position position="35"/>
    </location>
    <ligand>
        <name>a divalent metal cation</name>
        <dbReference type="ChEBI" id="CHEBI:60240"/>
        <label>5</label>
        <note>in cluster A</note>
    </ligand>
</feature>
<feature type="binding site" evidence="2">
    <location>
        <position position="36"/>
    </location>
    <ligand>
        <name>a divalent metal cation</name>
        <dbReference type="ChEBI" id="CHEBI:60240"/>
        <label>5</label>
        <note>in cluster A</note>
    </ligand>
</feature>
<feature type="binding site" evidence="2">
    <location>
        <position position="36"/>
    </location>
    <ligand>
        <name>a divalent metal cation</name>
        <dbReference type="ChEBI" id="CHEBI:60240"/>
        <label>6</label>
        <note>in cluster A</note>
    </ligand>
</feature>
<feature type="binding site" evidence="2">
    <location>
        <position position="40"/>
    </location>
    <ligand>
        <name>a divalent metal cation</name>
        <dbReference type="ChEBI" id="CHEBI:60240"/>
        <label>6</label>
        <note>in cluster A</note>
    </ligand>
</feature>
<feature type="binding site" evidence="2">
    <location>
        <position position="43"/>
    </location>
    <ligand>
        <name>a divalent metal cation</name>
        <dbReference type="ChEBI" id="CHEBI:60240"/>
        <label>4</label>
        <note>in cluster A</note>
    </ligand>
</feature>
<feature type="binding site" evidence="2">
    <location>
        <position position="43"/>
    </location>
    <ligand>
        <name>a divalent metal cation</name>
        <dbReference type="ChEBI" id="CHEBI:60240"/>
        <label>6</label>
        <note>in cluster A</note>
    </ligand>
</feature>
<feature type="binding site" evidence="2">
    <location>
        <position position="47"/>
    </location>
    <ligand>
        <name>a divalent metal cation</name>
        <dbReference type="ChEBI" id="CHEBI:60240"/>
        <label>4</label>
        <note>in cluster A</note>
    </ligand>
</feature>
<feature type="binding site" evidence="2">
    <location>
        <position position="49"/>
    </location>
    <ligand>
        <name>a divalent metal cation</name>
        <dbReference type="ChEBI" id="CHEBI:60240"/>
        <label>5</label>
        <note>in cluster A</note>
    </ligand>
</feature>
<feature type="binding site" evidence="2">
    <location>
        <position position="49"/>
    </location>
    <ligand>
        <name>a divalent metal cation</name>
        <dbReference type="ChEBI" id="CHEBI:60240"/>
        <label>7</label>
        <note>in cluster A</note>
    </ligand>
</feature>
<feature type="binding site" evidence="3">
    <location>
        <position position="54"/>
    </location>
    <ligand>
        <name>a divalent metal cation</name>
        <dbReference type="ChEBI" id="CHEBI:60240"/>
        <label>7</label>
        <note>in cluster A</note>
    </ligand>
</feature>
<feature type="binding site" evidence="2">
    <location>
        <position position="58"/>
    </location>
    <ligand>
        <name>a divalent metal cation</name>
        <dbReference type="ChEBI" id="CHEBI:60240"/>
        <label>7</label>
        <note>in cluster A</note>
    </ligand>
</feature>
<feature type="binding site" evidence="2">
    <location>
        <position position="59"/>
    </location>
    <ligand>
        <name>a divalent metal cation</name>
        <dbReference type="ChEBI" id="CHEBI:60240"/>
        <label>6</label>
        <note>in cluster A</note>
    </ligand>
</feature>
<feature type="binding site" evidence="2">
    <location>
        <position position="59"/>
    </location>
    <ligand>
        <name>a divalent metal cation</name>
        <dbReference type="ChEBI" id="CHEBI:60240"/>
        <label>7</label>
        <note>in cluster A</note>
    </ligand>
</feature>
<name>MTA_CARCW</name>
<evidence type="ECO:0000250" key="1"/>
<evidence type="ECO:0000250" key="2">
    <source>
        <dbReference type="UniProtKB" id="P02795"/>
    </source>
</evidence>
<evidence type="ECO:0000250" key="3">
    <source>
        <dbReference type="UniProtKB" id="P62339"/>
    </source>
</evidence>
<evidence type="ECO:0000305" key="4"/>
<accession>Q8AWG2</accession>
<gene>
    <name type="primary">mta</name>
</gene>
<sequence length="60" mass="5958">MDPCDCAKTGPCNCGATCKCTNCQCTTCKKSCCSCCPSGCSKCASGCVCKGNSCGSSCCQ</sequence>
<reference key="1">
    <citation type="journal article" date="2000" name="Biol. Pharm. Bull.">
        <title>Two metallothioneins in the fresh-water fish, crucian carp (Carassius cuvieri): cDNA cloning and assignment of their expression isoforms.</title>
        <authorList>
            <person name="Ren H.W."/>
            <person name="Itoh N."/>
            <person name="Kanekiyo M."/>
            <person name="Tominaga S."/>
            <person name="Kohroki J."/>
            <person name="Hwang G.S."/>
            <person name="Nakanishi T."/>
            <person name="Muto N."/>
            <person name="Tanaka K."/>
        </authorList>
    </citation>
    <scope>NUCLEOTIDE SEQUENCE [MRNA]</scope>
</reference>